<name>COQ4_PICST</name>
<dbReference type="EC" id="4.1.1.130" evidence="1"/>
<dbReference type="EMBL" id="CP000500">
    <property type="protein sequence ID" value="ABN67459.2"/>
    <property type="molecule type" value="Genomic_DNA"/>
</dbReference>
<dbReference type="RefSeq" id="XP_001385488.2">
    <property type="nucleotide sequence ID" value="XM_001385451.1"/>
</dbReference>
<dbReference type="SMR" id="A3LXH5"/>
<dbReference type="FunCoup" id="A3LXH5">
    <property type="interactions" value="549"/>
</dbReference>
<dbReference type="STRING" id="322104.A3LXH5"/>
<dbReference type="GeneID" id="4840366"/>
<dbReference type="KEGG" id="pic:PICST_90569"/>
<dbReference type="eggNOG" id="KOG3244">
    <property type="taxonomic scope" value="Eukaryota"/>
</dbReference>
<dbReference type="HOGENOM" id="CLU_061241_0_2_1"/>
<dbReference type="InParanoid" id="A3LXH5"/>
<dbReference type="OMA" id="YYERHFH"/>
<dbReference type="OrthoDB" id="4249at2759"/>
<dbReference type="UniPathway" id="UPA00232"/>
<dbReference type="Proteomes" id="UP000002258">
    <property type="component" value="Chromosome 6"/>
</dbReference>
<dbReference type="GO" id="GO:0031314">
    <property type="term" value="C:extrinsic component of mitochondrial inner membrane"/>
    <property type="evidence" value="ECO:0007669"/>
    <property type="project" value="UniProtKB-UniRule"/>
</dbReference>
<dbReference type="GO" id="GO:0006744">
    <property type="term" value="P:ubiquinone biosynthetic process"/>
    <property type="evidence" value="ECO:0007669"/>
    <property type="project" value="UniProtKB-UniRule"/>
</dbReference>
<dbReference type="HAMAP" id="MF_03111">
    <property type="entry name" value="Coq4"/>
    <property type="match status" value="1"/>
</dbReference>
<dbReference type="InterPro" id="IPR007715">
    <property type="entry name" value="Coq4"/>
</dbReference>
<dbReference type="InterPro" id="IPR027540">
    <property type="entry name" value="Coq4_euk"/>
</dbReference>
<dbReference type="PANTHER" id="PTHR12922">
    <property type="entry name" value="UBIQUINONE BIOSYNTHESIS PROTEIN"/>
    <property type="match status" value="1"/>
</dbReference>
<dbReference type="PANTHER" id="PTHR12922:SF7">
    <property type="entry name" value="UBIQUINONE BIOSYNTHESIS PROTEIN COQ4 HOMOLOG, MITOCHONDRIAL"/>
    <property type="match status" value="1"/>
</dbReference>
<dbReference type="Pfam" id="PF05019">
    <property type="entry name" value="Coq4"/>
    <property type="match status" value="1"/>
</dbReference>
<protein>
    <recommendedName>
        <fullName evidence="1">Ubiquinone biosynthesis protein COQ4, mitochondrial</fullName>
    </recommendedName>
    <alternativeName>
        <fullName>4-hydroxy-3-methoxy-5-polyprenylbenzoate decarboxylase</fullName>
        <ecNumber evidence="1">4.1.1.130</ecNumber>
    </alternativeName>
    <alternativeName>
        <fullName evidence="1">Coenzyme Q biosynthesis protein 4</fullName>
    </alternativeName>
</protein>
<evidence type="ECO:0000255" key="1">
    <source>
        <dbReference type="HAMAP-Rule" id="MF_03111"/>
    </source>
</evidence>
<comment type="function">
    <text evidence="1">Lyase that catalyzes the C1-decarboxylation of 4-hydroxy-3-methoxy-5-(all-trans-polyprenyl)benzoic acid into 2-methoxy-6-(all-trans-polyprenyl)phenol during ubiquinone biosynthesis.</text>
</comment>
<comment type="catalytic activity">
    <reaction evidence="1">
        <text>a 4-hydroxy-3-methoxy-5-(all-trans-polyprenyl)benzoate + H(+) = a 2-methoxy-6-(all-trans-polyprenyl)phenol + CO2</text>
        <dbReference type="Rhea" id="RHEA:81179"/>
        <dbReference type="Rhea" id="RHEA-COMP:9551"/>
        <dbReference type="Rhea" id="RHEA-COMP:10931"/>
        <dbReference type="ChEBI" id="CHEBI:15378"/>
        <dbReference type="ChEBI" id="CHEBI:16526"/>
        <dbReference type="ChEBI" id="CHEBI:62731"/>
        <dbReference type="ChEBI" id="CHEBI:84443"/>
        <dbReference type="EC" id="4.1.1.130"/>
    </reaction>
</comment>
<comment type="cofactor">
    <cofactor evidence="1">
        <name>Zn(2+)</name>
        <dbReference type="ChEBI" id="CHEBI:29105"/>
    </cofactor>
</comment>
<comment type="pathway">
    <text evidence="1">Cofactor biosynthesis; ubiquinone biosynthesis.</text>
</comment>
<comment type="subunit">
    <text evidence="1">Component of a multi-subunit COQ enzyme complex, composed of at least COQ3, COQ4, COQ5, COQ6, COQ7 and COQ9.</text>
</comment>
<comment type="subcellular location">
    <subcellularLocation>
        <location evidence="1">Mitochondrion inner membrane</location>
        <topology evidence="1">Peripheral membrane protein</topology>
        <orientation evidence="1">Matrix side</orientation>
    </subcellularLocation>
</comment>
<comment type="similarity">
    <text evidence="1">Belongs to the COQ4 family.</text>
</comment>
<sequence>MFARSALGRSDQLVTALNSQKRQFVLTAATTALGSLLFSEDNRLASQMEKGLLHNKNAENSASIPNTANKFFSRPEAEYPGHVPLYTFEKMLMFLGSSVGAYTHPERNEFIVALGESTAITPVLRRLQHQMLSDPVGRQILRERPRMTSTSLDLEHLRELPDNTIGKTYVKWLDKEGVSPDTRVEVKYIDNEELAYIYQRYRECHDFYHAITGLPIIIEGEISVKVFEYMNIGIPMSGLGALFAPLRLKKSQKERLYNIYYPWAFKSGLNSKPLINVYWENILEEDIDEFRKTMGIEQPPDLRNLRKEYFKKLKEAKKIV</sequence>
<accession>A3LXH5</accession>
<feature type="transit peptide" description="Mitochondrion" evidence="1">
    <location>
        <begin position="1"/>
        <end position="31"/>
    </location>
</feature>
<feature type="chain" id="PRO_0000388131" description="Ubiquinone biosynthesis protein COQ4, mitochondrial">
    <location>
        <begin position="32"/>
        <end position="320"/>
    </location>
</feature>
<feature type="binding site" evidence="1">
    <location>
        <position position="205"/>
    </location>
    <ligand>
        <name>Zn(2+)</name>
        <dbReference type="ChEBI" id="CHEBI:29105"/>
    </ligand>
</feature>
<feature type="binding site" evidence="1">
    <location>
        <position position="206"/>
    </location>
    <ligand>
        <name>Zn(2+)</name>
        <dbReference type="ChEBI" id="CHEBI:29105"/>
    </ligand>
</feature>
<feature type="binding site" evidence="1">
    <location>
        <position position="209"/>
    </location>
    <ligand>
        <name>Zn(2+)</name>
        <dbReference type="ChEBI" id="CHEBI:29105"/>
    </ligand>
</feature>
<feature type="binding site" evidence="1">
    <location>
        <position position="221"/>
    </location>
    <ligand>
        <name>Zn(2+)</name>
        <dbReference type="ChEBI" id="CHEBI:29105"/>
    </ligand>
</feature>
<organism>
    <name type="scientific">Scheffersomyces stipitis (strain ATCC 58785 / CBS 6054 / NBRC 10063 / NRRL Y-11545)</name>
    <name type="common">Yeast</name>
    <name type="synonym">Pichia stipitis</name>
    <dbReference type="NCBI Taxonomy" id="322104"/>
    <lineage>
        <taxon>Eukaryota</taxon>
        <taxon>Fungi</taxon>
        <taxon>Dikarya</taxon>
        <taxon>Ascomycota</taxon>
        <taxon>Saccharomycotina</taxon>
        <taxon>Pichiomycetes</taxon>
        <taxon>Debaryomycetaceae</taxon>
        <taxon>Scheffersomyces</taxon>
    </lineage>
</organism>
<reference key="1">
    <citation type="journal article" date="2007" name="Nat. Biotechnol.">
        <title>Genome sequence of the lignocellulose-bioconverting and xylose-fermenting yeast Pichia stipitis.</title>
        <authorList>
            <person name="Jeffries T.W."/>
            <person name="Grigoriev I.V."/>
            <person name="Grimwood J."/>
            <person name="Laplaza J.M."/>
            <person name="Aerts A."/>
            <person name="Salamov A."/>
            <person name="Schmutz J."/>
            <person name="Lindquist E."/>
            <person name="Dehal P."/>
            <person name="Shapiro H."/>
            <person name="Jin Y.-S."/>
            <person name="Passoth V."/>
            <person name="Richardson P.M."/>
        </authorList>
    </citation>
    <scope>NUCLEOTIDE SEQUENCE [LARGE SCALE GENOMIC DNA]</scope>
    <source>
        <strain>ATCC 58785 / CBS 6054 / NBRC 10063 / NRRL Y-11545</strain>
    </source>
</reference>
<keyword id="KW-0456">Lyase</keyword>
<keyword id="KW-0472">Membrane</keyword>
<keyword id="KW-0479">Metal-binding</keyword>
<keyword id="KW-0496">Mitochondrion</keyword>
<keyword id="KW-0999">Mitochondrion inner membrane</keyword>
<keyword id="KW-1185">Reference proteome</keyword>
<keyword id="KW-0809">Transit peptide</keyword>
<keyword id="KW-0831">Ubiquinone biosynthesis</keyword>
<keyword id="KW-0862">Zinc</keyword>
<proteinExistence type="inferred from homology"/>
<gene>
    <name evidence="1" type="primary">COQ4</name>
    <name type="ORF">PICST_90569</name>
</gene>